<evidence type="ECO:0000255" key="1">
    <source>
        <dbReference type="HAMAP-Rule" id="MF_00186"/>
    </source>
</evidence>
<evidence type="ECO:0000269" key="2">
    <source>
    </source>
</evidence>
<evidence type="ECO:0000269" key="3">
    <source>
    </source>
</evidence>
<evidence type="ECO:0000305" key="4"/>
<evidence type="ECO:0000305" key="5">
    <source>
    </source>
</evidence>
<evidence type="ECO:0007829" key="6">
    <source>
        <dbReference type="PDB" id="6K76"/>
    </source>
</evidence>
<evidence type="ECO:0007829" key="7">
    <source>
        <dbReference type="PDB" id="6K78"/>
    </source>
</evidence>
<evidence type="ECO:0007829" key="8">
    <source>
        <dbReference type="PDB" id="6K79"/>
    </source>
</evidence>
<gene>
    <name evidence="1" type="primary">glpK</name>
    <name type="ordered locus">TK1396</name>
</gene>
<reference key="1">
    <citation type="journal article" date="1998" name="Protein Eng.">
        <title>Thermostable glycerol kinase from a hyperthermophilic archaeon: gene cloning and characterization of the recombinant enzyme.</title>
        <authorList>
            <person name="Koga Y."/>
            <person name="Morikawa M."/>
            <person name="Haruki M."/>
            <person name="Nakamura H."/>
            <person name="Imanaka T."/>
            <person name="Kanaya S."/>
        </authorList>
    </citation>
    <scope>NUCLEOTIDE SEQUENCE [GENOMIC DNA]</scope>
    <scope>PROTEIN SEQUENCE OF 1-10</scope>
    <scope>FUNCTION</scope>
    <scope>CATALYTIC ACTIVITY</scope>
    <scope>BIOPHYSICOCHEMICAL PROPERTIES</scope>
    <scope>SUBSTRATE SPECIFICITY</scope>
    <scope>SUBUNIT</scope>
    <source>
        <strain>ATCC BAA-918 / JCM 12380 / KOD1</strain>
    </source>
</reference>
<reference key="2">
    <citation type="journal article" date="2005" name="Genome Res.">
        <title>Complete genome sequence of the hyperthermophilic archaeon Thermococcus kodakaraensis KOD1 and comparison with Pyrococcus genomes.</title>
        <authorList>
            <person name="Fukui T."/>
            <person name="Atomi H."/>
            <person name="Kanai T."/>
            <person name="Matsumi R."/>
            <person name="Fujiwara S."/>
            <person name="Imanaka T."/>
        </authorList>
    </citation>
    <scope>NUCLEOTIDE SEQUENCE [LARGE SCALE GENOMIC DNA]</scope>
    <source>
        <strain>ATCC BAA-918 / JCM 12380 / KOD1</strain>
    </source>
</reference>
<reference key="3">
    <citation type="journal article" date="2008" name="FEBS J.">
        <title>Crystal structure of highly thermostable glycerol kinase from a hyperthermophilic archaeon in a dimeric form.</title>
        <authorList>
            <person name="Koga Y."/>
            <person name="Katsumi R."/>
            <person name="You D.J."/>
            <person name="Matsumura H."/>
            <person name="Takano K."/>
            <person name="Kanaya S."/>
        </authorList>
    </citation>
    <scope>X-RAY CRYSTALLOGRAPHY (2.4 ANGSTROMS)</scope>
    <scope>THERMOSTABILITY</scope>
    <scope>SUBUNIT</scope>
</reference>
<sequence length="497" mass="55904">MEKFVLSLDEGTTSARAIIFDRESNIHGIGQYEFPQHYPRPGWVEHNPEEIWDAQLRAIKDAIQSARIEPNQIAAIGVTNQRETTLVWDKDGKPLYNAIVWQCRRTAEMVEEIKREYGTMIKEKTGLVPDAYFSASKLKWLLDNVPGLREKAEKGEVMFGTVDTFLIYRLTGEHVTDYSNASRTMLFNIKKLDWDDELLELFDIPESVLPEVRESSEVYGYTKKELLGAEIPVSGDAGDQQAALFGQAAFEAGMVKATYGTGSFILVNTDKMVLYSDNLLTTIAWGLNGRVSYALEGSIFVTGAAVQWLRDGIKIIKHASETEELATKLESNEGVYFVPAFVGLGAPYWDQFARGIIIGITRGTGREHLARATLEAIAYLTRDVVDEMEKLVQIKELRVDGGATANDFLMQFQADILNRKVIRPVVKETTALGAAYLAGLAVDYWADTREIAELWKAERIFEPKMDEKTRERLYKGWKEAVKRAMGWAKVVDSAKSN</sequence>
<name>GLPK_THEKO</name>
<comment type="function">
    <text evidence="1 3">Key enzyme in the regulation of glycerol uptake and metabolism. Catalyzes the phosphorylation of glycerol to yield sn-glycerol 3-phosphate. Can utilize other nucleoside triphosphates (GTP, CTP, UTP and ITP) as a phosphoryl donor.</text>
</comment>
<comment type="catalytic activity">
    <reaction evidence="1 3">
        <text>glycerol + ATP = sn-glycerol 3-phosphate + ADP + H(+)</text>
        <dbReference type="Rhea" id="RHEA:21644"/>
        <dbReference type="ChEBI" id="CHEBI:15378"/>
        <dbReference type="ChEBI" id="CHEBI:17754"/>
        <dbReference type="ChEBI" id="CHEBI:30616"/>
        <dbReference type="ChEBI" id="CHEBI:57597"/>
        <dbReference type="ChEBI" id="CHEBI:456216"/>
        <dbReference type="EC" id="2.7.1.30"/>
    </reaction>
</comment>
<comment type="biophysicochemical properties">
    <kinetics>
        <KM evidence="3">15.4 uM for ATP (at pH 7.5 and 80 degrees Celsius)</KM>
        <KM evidence="3">111 uM for glycerol (at pH 7.5 and 80 degrees Celsius)</KM>
        <text>kcat is 940 sec(-1) for glycerol (at pH 7.5 and 80 degrees Celsius).</text>
    </kinetics>
    <phDependence>
        <text evidence="3">Optimum pH is 8.0. It is highly thermosatble.</text>
    </phDependence>
    <temperatureDependence>
        <text evidence="3">Optimum temperature is 80 degrees Celsius.</text>
    </temperatureDependence>
</comment>
<comment type="pathway">
    <text evidence="1">Polyol metabolism; glycerol degradation via glycerol kinase pathway; sn-glycerol 3-phosphate from glycerol: step 1/1.</text>
</comment>
<comment type="subunit">
    <text evidence="2 3">Homodimer.</text>
</comment>
<comment type="miscellaneous">
    <text evidence="5">It is not sensitive to fructose-1,6-bisphosphate (FBP).</text>
</comment>
<comment type="similarity">
    <text evidence="1">Belongs to the FGGY kinase family.</text>
</comment>
<keyword id="KW-0002">3D-structure</keyword>
<keyword id="KW-0067">ATP-binding</keyword>
<keyword id="KW-0903">Direct protein sequencing</keyword>
<keyword id="KW-0319">Glycerol metabolism</keyword>
<keyword id="KW-0418">Kinase</keyword>
<keyword id="KW-0547">Nucleotide-binding</keyword>
<keyword id="KW-1185">Reference proteome</keyword>
<keyword id="KW-0808">Transferase</keyword>
<accession>O93623</accession>
<accession>Q5JGZ4</accession>
<feature type="chain" id="PRO_0000059530" description="Glycerol kinase">
    <location>
        <begin position="1"/>
        <end position="497"/>
    </location>
</feature>
<feature type="binding site" evidence="1">
    <location>
        <position position="12"/>
    </location>
    <ligand>
        <name>ADP</name>
        <dbReference type="ChEBI" id="CHEBI:456216"/>
    </ligand>
</feature>
<feature type="binding site" evidence="1">
    <location>
        <position position="12"/>
    </location>
    <ligand>
        <name>ATP</name>
        <dbReference type="ChEBI" id="CHEBI:30616"/>
    </ligand>
</feature>
<feature type="binding site" evidence="1">
    <location>
        <position position="12"/>
    </location>
    <ligand>
        <name>sn-glycerol 3-phosphate</name>
        <dbReference type="ChEBI" id="CHEBI:57597"/>
    </ligand>
</feature>
<feature type="binding site" evidence="1">
    <location>
        <position position="13"/>
    </location>
    <ligand>
        <name>ATP</name>
        <dbReference type="ChEBI" id="CHEBI:30616"/>
    </ligand>
</feature>
<feature type="binding site" evidence="1">
    <location>
        <position position="14"/>
    </location>
    <ligand>
        <name>ATP</name>
        <dbReference type="ChEBI" id="CHEBI:30616"/>
    </ligand>
</feature>
<feature type="binding site" evidence="1">
    <location>
        <position position="16"/>
    </location>
    <ligand>
        <name>ADP</name>
        <dbReference type="ChEBI" id="CHEBI:456216"/>
    </ligand>
</feature>
<feature type="binding site" evidence="1">
    <location>
        <position position="82"/>
    </location>
    <ligand>
        <name>glycerol</name>
        <dbReference type="ChEBI" id="CHEBI:17754"/>
    </ligand>
</feature>
<feature type="binding site" evidence="1">
    <location>
        <position position="82"/>
    </location>
    <ligand>
        <name>sn-glycerol 3-phosphate</name>
        <dbReference type="ChEBI" id="CHEBI:57597"/>
    </ligand>
</feature>
<feature type="binding site" evidence="1">
    <location>
        <position position="83"/>
    </location>
    <ligand>
        <name>glycerol</name>
        <dbReference type="ChEBI" id="CHEBI:17754"/>
    </ligand>
</feature>
<feature type="binding site" evidence="1">
    <location>
        <position position="83"/>
    </location>
    <ligand>
        <name>sn-glycerol 3-phosphate</name>
        <dbReference type="ChEBI" id="CHEBI:57597"/>
    </ligand>
</feature>
<feature type="binding site" evidence="1">
    <location>
        <position position="132"/>
    </location>
    <ligand>
        <name>glycerol</name>
        <dbReference type="ChEBI" id="CHEBI:17754"/>
    </ligand>
</feature>
<feature type="binding site" evidence="1">
    <location>
        <position position="132"/>
    </location>
    <ligand>
        <name>sn-glycerol 3-phosphate</name>
        <dbReference type="ChEBI" id="CHEBI:57597"/>
    </ligand>
</feature>
<feature type="binding site" evidence="1">
    <location>
        <position position="239"/>
    </location>
    <ligand>
        <name>glycerol</name>
        <dbReference type="ChEBI" id="CHEBI:17754"/>
    </ligand>
</feature>
<feature type="binding site" evidence="1">
    <location>
        <position position="239"/>
    </location>
    <ligand>
        <name>sn-glycerol 3-phosphate</name>
        <dbReference type="ChEBI" id="CHEBI:57597"/>
    </ligand>
</feature>
<feature type="binding site" evidence="1">
    <location>
        <position position="240"/>
    </location>
    <ligand>
        <name>glycerol</name>
        <dbReference type="ChEBI" id="CHEBI:17754"/>
    </ligand>
</feature>
<feature type="binding site" evidence="1">
    <location>
        <position position="261"/>
    </location>
    <ligand>
        <name>ADP</name>
        <dbReference type="ChEBI" id="CHEBI:456216"/>
    </ligand>
</feature>
<feature type="binding site" evidence="1">
    <location>
        <position position="261"/>
    </location>
    <ligand>
        <name>ATP</name>
        <dbReference type="ChEBI" id="CHEBI:30616"/>
    </ligand>
</feature>
<feature type="binding site" evidence="1">
    <location>
        <position position="303"/>
    </location>
    <ligand>
        <name>ADP</name>
        <dbReference type="ChEBI" id="CHEBI:456216"/>
    </ligand>
</feature>
<feature type="binding site" evidence="1">
    <location>
        <position position="303"/>
    </location>
    <ligand>
        <name>ATP</name>
        <dbReference type="ChEBI" id="CHEBI:30616"/>
    </ligand>
</feature>
<feature type="binding site" evidence="1">
    <location>
        <position position="307"/>
    </location>
    <ligand>
        <name>ATP</name>
        <dbReference type="ChEBI" id="CHEBI:30616"/>
    </ligand>
</feature>
<feature type="binding site" evidence="1">
    <location>
        <position position="402"/>
    </location>
    <ligand>
        <name>ADP</name>
        <dbReference type="ChEBI" id="CHEBI:456216"/>
    </ligand>
</feature>
<feature type="binding site" evidence="1">
    <location>
        <position position="402"/>
    </location>
    <ligand>
        <name>ATP</name>
        <dbReference type="ChEBI" id="CHEBI:30616"/>
    </ligand>
</feature>
<feature type="binding site" evidence="1">
    <location>
        <position position="406"/>
    </location>
    <ligand>
        <name>ADP</name>
        <dbReference type="ChEBI" id="CHEBI:456216"/>
    </ligand>
</feature>
<feature type="sequence conflict" description="In Ref. 1; BAA34909." evidence="4" ref="1">
    <original>N</original>
    <variation>D</variation>
    <location>
        <position position="25"/>
    </location>
</feature>
<feature type="strand" evidence="8">
    <location>
        <begin position="4"/>
        <end position="10"/>
    </location>
</feature>
<feature type="strand" evidence="8">
    <location>
        <begin position="12"/>
        <end position="20"/>
    </location>
</feature>
<feature type="turn" evidence="6">
    <location>
        <begin position="22"/>
        <end position="24"/>
    </location>
</feature>
<feature type="strand" evidence="8">
    <location>
        <begin position="26"/>
        <end position="33"/>
    </location>
</feature>
<feature type="helix" evidence="8">
    <location>
        <begin position="48"/>
        <end position="66"/>
    </location>
</feature>
<feature type="helix" evidence="8">
    <location>
        <begin position="70"/>
        <end position="72"/>
    </location>
</feature>
<feature type="strand" evidence="8">
    <location>
        <begin position="73"/>
        <end position="80"/>
    </location>
</feature>
<feature type="strand" evidence="8">
    <location>
        <begin position="85"/>
        <end position="88"/>
    </location>
</feature>
<feature type="strand" evidence="8">
    <location>
        <begin position="94"/>
        <end position="96"/>
    </location>
</feature>
<feature type="helix" evidence="8">
    <location>
        <begin position="107"/>
        <end position="124"/>
    </location>
</feature>
<feature type="strand" evidence="8">
    <location>
        <begin position="125"/>
        <end position="127"/>
    </location>
</feature>
<feature type="helix" evidence="8">
    <location>
        <begin position="134"/>
        <end position="144"/>
    </location>
</feature>
<feature type="helix" evidence="8">
    <location>
        <begin position="148"/>
        <end position="153"/>
    </location>
</feature>
<feature type="strand" evidence="8">
    <location>
        <begin position="158"/>
        <end position="161"/>
    </location>
</feature>
<feature type="helix" evidence="8">
    <location>
        <begin position="162"/>
        <end position="171"/>
    </location>
</feature>
<feature type="strand" evidence="8">
    <location>
        <begin position="175"/>
        <end position="177"/>
    </location>
</feature>
<feature type="helix" evidence="8">
    <location>
        <begin position="178"/>
        <end position="182"/>
    </location>
</feature>
<feature type="strand" evidence="8">
    <location>
        <begin position="185"/>
        <end position="188"/>
    </location>
</feature>
<feature type="turn" evidence="8">
    <location>
        <begin position="189"/>
        <end position="192"/>
    </location>
</feature>
<feature type="helix" evidence="8">
    <location>
        <begin position="196"/>
        <end position="201"/>
    </location>
</feature>
<feature type="helix" evidence="8">
    <location>
        <begin position="206"/>
        <end position="208"/>
    </location>
</feature>
<feature type="strand" evidence="8">
    <location>
        <begin position="211"/>
        <end position="213"/>
    </location>
</feature>
<feature type="strand" evidence="8">
    <location>
        <begin position="215"/>
        <end position="221"/>
    </location>
</feature>
<feature type="helix" evidence="8">
    <location>
        <begin position="224"/>
        <end position="227"/>
    </location>
</feature>
<feature type="strand" evidence="8">
    <location>
        <begin position="232"/>
        <end position="238"/>
    </location>
</feature>
<feature type="helix" evidence="8">
    <location>
        <begin position="239"/>
        <end position="246"/>
    </location>
</feature>
<feature type="strand" evidence="8">
    <location>
        <begin position="254"/>
        <end position="270"/>
    </location>
</feature>
<feature type="strand" evidence="8">
    <location>
        <begin position="279"/>
        <end position="286"/>
    </location>
</feature>
<feature type="strand" evidence="8">
    <location>
        <begin position="291"/>
        <end position="300"/>
    </location>
</feature>
<feature type="helix" evidence="8">
    <location>
        <begin position="303"/>
        <end position="311"/>
    </location>
</feature>
<feature type="helix" evidence="8">
    <location>
        <begin position="321"/>
        <end position="326"/>
    </location>
</feature>
<feature type="strand" evidence="7">
    <location>
        <begin position="329"/>
        <end position="331"/>
    </location>
</feature>
<feature type="strand" evidence="8">
    <location>
        <begin position="336"/>
        <end position="338"/>
    </location>
</feature>
<feature type="turn" evidence="8">
    <location>
        <begin position="346"/>
        <end position="348"/>
    </location>
</feature>
<feature type="strand" evidence="8">
    <location>
        <begin position="356"/>
        <end position="358"/>
    </location>
</feature>
<feature type="helix" evidence="8">
    <location>
        <begin position="366"/>
        <end position="389"/>
    </location>
</feature>
<feature type="strand" evidence="8">
    <location>
        <begin position="396"/>
        <end position="401"/>
    </location>
</feature>
<feature type="helix" evidence="8">
    <location>
        <begin position="402"/>
        <end position="405"/>
    </location>
</feature>
<feature type="helix" evidence="8">
    <location>
        <begin position="407"/>
        <end position="417"/>
    </location>
</feature>
<feature type="strand" evidence="8">
    <location>
        <begin position="421"/>
        <end position="425"/>
    </location>
</feature>
<feature type="helix" evidence="8">
    <location>
        <begin position="429"/>
        <end position="441"/>
    </location>
</feature>
<feature type="strand" evidence="8">
    <location>
        <begin position="444"/>
        <end position="446"/>
    </location>
</feature>
<feature type="helix" evidence="8">
    <location>
        <begin position="448"/>
        <end position="454"/>
    </location>
</feature>
<feature type="strand" evidence="8">
    <location>
        <begin position="457"/>
        <end position="461"/>
    </location>
</feature>
<feature type="helix" evidence="8">
    <location>
        <begin position="467"/>
        <end position="484"/>
    </location>
</feature>
<feature type="helix" evidence="8">
    <location>
        <begin position="487"/>
        <end position="490"/>
    </location>
</feature>
<protein>
    <recommendedName>
        <fullName evidence="1">Glycerol kinase</fullName>
        <ecNumber evidence="1">2.7.1.30</ecNumber>
    </recommendedName>
    <alternativeName>
        <fullName evidence="1">ATP:glycerol 3-phosphotransferase</fullName>
    </alternativeName>
    <alternativeName>
        <fullName evidence="1">Glycerokinase</fullName>
        <shortName evidence="1">GK</shortName>
    </alternativeName>
</protein>
<organism>
    <name type="scientific">Thermococcus kodakarensis (strain ATCC BAA-918 / JCM 12380 / KOD1)</name>
    <name type="common">Pyrococcus kodakaraensis (strain KOD1)</name>
    <dbReference type="NCBI Taxonomy" id="69014"/>
    <lineage>
        <taxon>Archaea</taxon>
        <taxon>Methanobacteriati</taxon>
        <taxon>Methanobacteriota</taxon>
        <taxon>Thermococci</taxon>
        <taxon>Thermococcales</taxon>
        <taxon>Thermococcaceae</taxon>
        <taxon>Thermococcus</taxon>
    </lineage>
</organism>
<dbReference type="EC" id="2.7.1.30" evidence="1"/>
<dbReference type="EMBL" id="AB012099">
    <property type="protein sequence ID" value="BAA34909.1"/>
    <property type="molecule type" value="Genomic_DNA"/>
</dbReference>
<dbReference type="EMBL" id="AP006878">
    <property type="protein sequence ID" value="BAD85585.1"/>
    <property type="molecule type" value="Genomic_DNA"/>
</dbReference>
<dbReference type="PIR" id="T43888">
    <property type="entry name" value="T43888"/>
</dbReference>
<dbReference type="RefSeq" id="WP_011250347.1">
    <property type="nucleotide sequence ID" value="NC_006624.1"/>
</dbReference>
<dbReference type="PDB" id="2ZF5">
    <property type="method" value="X-ray"/>
    <property type="resolution" value="2.40 A"/>
    <property type="chains" value="O/Y=1-497"/>
</dbReference>
<dbReference type="PDB" id="6K76">
    <property type="method" value="X-ray"/>
    <property type="resolution" value="3.05 A"/>
    <property type="chains" value="A/B=1-497"/>
</dbReference>
<dbReference type="PDB" id="6K78">
    <property type="method" value="X-ray"/>
    <property type="resolution" value="2.30 A"/>
    <property type="chains" value="A/B/C/D=1-497"/>
</dbReference>
<dbReference type="PDB" id="6K79">
    <property type="method" value="X-ray"/>
    <property type="resolution" value="2.19 A"/>
    <property type="chains" value="A/B/C/D=1-497"/>
</dbReference>
<dbReference type="PDBsum" id="2ZF5"/>
<dbReference type="PDBsum" id="6K76"/>
<dbReference type="PDBsum" id="6K78"/>
<dbReference type="PDBsum" id="6K79"/>
<dbReference type="SMR" id="O93623"/>
<dbReference type="IntAct" id="O93623">
    <property type="interactions" value="1"/>
</dbReference>
<dbReference type="MINT" id="O93623"/>
<dbReference type="STRING" id="69014.TK1396"/>
<dbReference type="EnsemblBacteria" id="BAD85585">
    <property type="protein sequence ID" value="BAD85585"/>
    <property type="gene ID" value="TK1396"/>
</dbReference>
<dbReference type="GeneID" id="78447916"/>
<dbReference type="KEGG" id="tko:TK1396"/>
<dbReference type="PATRIC" id="fig|69014.16.peg.1358"/>
<dbReference type="eggNOG" id="arCOG00024">
    <property type="taxonomic scope" value="Archaea"/>
</dbReference>
<dbReference type="HOGENOM" id="CLU_009281_2_3_2"/>
<dbReference type="InParanoid" id="O93623"/>
<dbReference type="OrthoDB" id="26592at2157"/>
<dbReference type="PhylomeDB" id="O93623"/>
<dbReference type="BRENDA" id="2.7.1.30">
    <property type="organism ID" value="5246"/>
</dbReference>
<dbReference type="UniPathway" id="UPA00618">
    <property type="reaction ID" value="UER00672"/>
</dbReference>
<dbReference type="EvolutionaryTrace" id="O93623"/>
<dbReference type="Proteomes" id="UP000000536">
    <property type="component" value="Chromosome"/>
</dbReference>
<dbReference type="GO" id="GO:0005829">
    <property type="term" value="C:cytosol"/>
    <property type="evidence" value="ECO:0000318"/>
    <property type="project" value="GO_Central"/>
</dbReference>
<dbReference type="GO" id="GO:0005524">
    <property type="term" value="F:ATP binding"/>
    <property type="evidence" value="ECO:0007669"/>
    <property type="project" value="UniProtKB-UniRule"/>
</dbReference>
<dbReference type="GO" id="GO:0004370">
    <property type="term" value="F:glycerol kinase activity"/>
    <property type="evidence" value="ECO:0000250"/>
    <property type="project" value="UniProtKB"/>
</dbReference>
<dbReference type="GO" id="GO:0019563">
    <property type="term" value="P:glycerol catabolic process"/>
    <property type="evidence" value="ECO:0007669"/>
    <property type="project" value="UniProtKB-UniRule"/>
</dbReference>
<dbReference type="GO" id="GO:0006071">
    <property type="term" value="P:glycerol metabolic process"/>
    <property type="evidence" value="ECO:0000250"/>
    <property type="project" value="UniProtKB"/>
</dbReference>
<dbReference type="GO" id="GO:0006072">
    <property type="term" value="P:glycerol-3-phosphate metabolic process"/>
    <property type="evidence" value="ECO:0007669"/>
    <property type="project" value="InterPro"/>
</dbReference>
<dbReference type="CDD" id="cd07786">
    <property type="entry name" value="FGGY_EcGK_like"/>
    <property type="match status" value="1"/>
</dbReference>
<dbReference type="FunFam" id="3.30.420.40:FF:000007">
    <property type="entry name" value="Glycerol kinase"/>
    <property type="match status" value="1"/>
</dbReference>
<dbReference type="FunFam" id="3.30.420.40:FF:000008">
    <property type="entry name" value="Glycerol kinase"/>
    <property type="match status" value="1"/>
</dbReference>
<dbReference type="Gene3D" id="3.30.420.40">
    <property type="match status" value="2"/>
</dbReference>
<dbReference type="HAMAP" id="MF_00186">
    <property type="entry name" value="Glycerol_kin"/>
    <property type="match status" value="1"/>
</dbReference>
<dbReference type="InterPro" id="IPR043129">
    <property type="entry name" value="ATPase_NBD"/>
</dbReference>
<dbReference type="InterPro" id="IPR000577">
    <property type="entry name" value="Carb_kinase_FGGY"/>
</dbReference>
<dbReference type="InterPro" id="IPR018483">
    <property type="entry name" value="Carb_kinase_FGGY_CS"/>
</dbReference>
<dbReference type="InterPro" id="IPR018485">
    <property type="entry name" value="FGGY_C"/>
</dbReference>
<dbReference type="InterPro" id="IPR018484">
    <property type="entry name" value="FGGY_N"/>
</dbReference>
<dbReference type="InterPro" id="IPR005999">
    <property type="entry name" value="Glycerol_kin"/>
</dbReference>
<dbReference type="NCBIfam" id="TIGR01311">
    <property type="entry name" value="glycerol_kin"/>
    <property type="match status" value="1"/>
</dbReference>
<dbReference type="NCBIfam" id="NF000756">
    <property type="entry name" value="PRK00047.1"/>
    <property type="match status" value="1"/>
</dbReference>
<dbReference type="PANTHER" id="PTHR10196:SF69">
    <property type="entry name" value="GLYCEROL KINASE"/>
    <property type="match status" value="1"/>
</dbReference>
<dbReference type="PANTHER" id="PTHR10196">
    <property type="entry name" value="SUGAR KINASE"/>
    <property type="match status" value="1"/>
</dbReference>
<dbReference type="Pfam" id="PF02782">
    <property type="entry name" value="FGGY_C"/>
    <property type="match status" value="1"/>
</dbReference>
<dbReference type="Pfam" id="PF00370">
    <property type="entry name" value="FGGY_N"/>
    <property type="match status" value="1"/>
</dbReference>
<dbReference type="PIRSF" id="PIRSF000538">
    <property type="entry name" value="GlpK"/>
    <property type="match status" value="1"/>
</dbReference>
<dbReference type="SUPFAM" id="SSF53067">
    <property type="entry name" value="Actin-like ATPase domain"/>
    <property type="match status" value="2"/>
</dbReference>
<dbReference type="PROSITE" id="PS00933">
    <property type="entry name" value="FGGY_KINASES_1"/>
    <property type="match status" value="1"/>
</dbReference>
<dbReference type="PROSITE" id="PS00445">
    <property type="entry name" value="FGGY_KINASES_2"/>
    <property type="match status" value="1"/>
</dbReference>
<proteinExistence type="evidence at protein level"/>